<reference key="1">
    <citation type="journal article" date="2005" name="Science">
        <title>The transcriptional landscape of the mammalian genome.</title>
        <authorList>
            <person name="Carninci P."/>
            <person name="Kasukawa T."/>
            <person name="Katayama S."/>
            <person name="Gough J."/>
            <person name="Frith M.C."/>
            <person name="Maeda N."/>
            <person name="Oyama R."/>
            <person name="Ravasi T."/>
            <person name="Lenhard B."/>
            <person name="Wells C."/>
            <person name="Kodzius R."/>
            <person name="Shimokawa K."/>
            <person name="Bajic V.B."/>
            <person name="Brenner S.E."/>
            <person name="Batalov S."/>
            <person name="Forrest A.R."/>
            <person name="Zavolan M."/>
            <person name="Davis M.J."/>
            <person name="Wilming L.G."/>
            <person name="Aidinis V."/>
            <person name="Allen J.E."/>
            <person name="Ambesi-Impiombato A."/>
            <person name="Apweiler R."/>
            <person name="Aturaliya R.N."/>
            <person name="Bailey T.L."/>
            <person name="Bansal M."/>
            <person name="Baxter L."/>
            <person name="Beisel K.W."/>
            <person name="Bersano T."/>
            <person name="Bono H."/>
            <person name="Chalk A.M."/>
            <person name="Chiu K.P."/>
            <person name="Choudhary V."/>
            <person name="Christoffels A."/>
            <person name="Clutterbuck D.R."/>
            <person name="Crowe M.L."/>
            <person name="Dalla E."/>
            <person name="Dalrymple B.P."/>
            <person name="de Bono B."/>
            <person name="Della Gatta G."/>
            <person name="di Bernardo D."/>
            <person name="Down T."/>
            <person name="Engstrom P."/>
            <person name="Fagiolini M."/>
            <person name="Faulkner G."/>
            <person name="Fletcher C.F."/>
            <person name="Fukushima T."/>
            <person name="Furuno M."/>
            <person name="Futaki S."/>
            <person name="Gariboldi M."/>
            <person name="Georgii-Hemming P."/>
            <person name="Gingeras T.R."/>
            <person name="Gojobori T."/>
            <person name="Green R.E."/>
            <person name="Gustincich S."/>
            <person name="Harbers M."/>
            <person name="Hayashi Y."/>
            <person name="Hensch T.K."/>
            <person name="Hirokawa N."/>
            <person name="Hill D."/>
            <person name="Huminiecki L."/>
            <person name="Iacono M."/>
            <person name="Ikeo K."/>
            <person name="Iwama A."/>
            <person name="Ishikawa T."/>
            <person name="Jakt M."/>
            <person name="Kanapin A."/>
            <person name="Katoh M."/>
            <person name="Kawasawa Y."/>
            <person name="Kelso J."/>
            <person name="Kitamura H."/>
            <person name="Kitano H."/>
            <person name="Kollias G."/>
            <person name="Krishnan S.P."/>
            <person name="Kruger A."/>
            <person name="Kummerfeld S.K."/>
            <person name="Kurochkin I.V."/>
            <person name="Lareau L.F."/>
            <person name="Lazarevic D."/>
            <person name="Lipovich L."/>
            <person name="Liu J."/>
            <person name="Liuni S."/>
            <person name="McWilliam S."/>
            <person name="Madan Babu M."/>
            <person name="Madera M."/>
            <person name="Marchionni L."/>
            <person name="Matsuda H."/>
            <person name="Matsuzawa S."/>
            <person name="Miki H."/>
            <person name="Mignone F."/>
            <person name="Miyake S."/>
            <person name="Morris K."/>
            <person name="Mottagui-Tabar S."/>
            <person name="Mulder N."/>
            <person name="Nakano N."/>
            <person name="Nakauchi H."/>
            <person name="Ng P."/>
            <person name="Nilsson R."/>
            <person name="Nishiguchi S."/>
            <person name="Nishikawa S."/>
            <person name="Nori F."/>
            <person name="Ohara O."/>
            <person name="Okazaki Y."/>
            <person name="Orlando V."/>
            <person name="Pang K.C."/>
            <person name="Pavan W.J."/>
            <person name="Pavesi G."/>
            <person name="Pesole G."/>
            <person name="Petrovsky N."/>
            <person name="Piazza S."/>
            <person name="Reed J."/>
            <person name="Reid J.F."/>
            <person name="Ring B.Z."/>
            <person name="Ringwald M."/>
            <person name="Rost B."/>
            <person name="Ruan Y."/>
            <person name="Salzberg S.L."/>
            <person name="Sandelin A."/>
            <person name="Schneider C."/>
            <person name="Schoenbach C."/>
            <person name="Sekiguchi K."/>
            <person name="Semple C.A."/>
            <person name="Seno S."/>
            <person name="Sessa L."/>
            <person name="Sheng Y."/>
            <person name="Shibata Y."/>
            <person name="Shimada H."/>
            <person name="Shimada K."/>
            <person name="Silva D."/>
            <person name="Sinclair B."/>
            <person name="Sperling S."/>
            <person name="Stupka E."/>
            <person name="Sugiura K."/>
            <person name="Sultana R."/>
            <person name="Takenaka Y."/>
            <person name="Taki K."/>
            <person name="Tammoja K."/>
            <person name="Tan S.L."/>
            <person name="Tang S."/>
            <person name="Taylor M.S."/>
            <person name="Tegner J."/>
            <person name="Teichmann S.A."/>
            <person name="Ueda H.R."/>
            <person name="van Nimwegen E."/>
            <person name="Verardo R."/>
            <person name="Wei C.L."/>
            <person name="Yagi K."/>
            <person name="Yamanishi H."/>
            <person name="Zabarovsky E."/>
            <person name="Zhu S."/>
            <person name="Zimmer A."/>
            <person name="Hide W."/>
            <person name="Bult C."/>
            <person name="Grimmond S.M."/>
            <person name="Teasdale R.D."/>
            <person name="Liu E.T."/>
            <person name="Brusic V."/>
            <person name="Quackenbush J."/>
            <person name="Wahlestedt C."/>
            <person name="Mattick J.S."/>
            <person name="Hume D.A."/>
            <person name="Kai C."/>
            <person name="Sasaki D."/>
            <person name="Tomaru Y."/>
            <person name="Fukuda S."/>
            <person name="Kanamori-Katayama M."/>
            <person name="Suzuki M."/>
            <person name="Aoki J."/>
            <person name="Arakawa T."/>
            <person name="Iida J."/>
            <person name="Imamura K."/>
            <person name="Itoh M."/>
            <person name="Kato T."/>
            <person name="Kawaji H."/>
            <person name="Kawagashira N."/>
            <person name="Kawashima T."/>
            <person name="Kojima M."/>
            <person name="Kondo S."/>
            <person name="Konno H."/>
            <person name="Nakano K."/>
            <person name="Ninomiya N."/>
            <person name="Nishio T."/>
            <person name="Okada M."/>
            <person name="Plessy C."/>
            <person name="Shibata K."/>
            <person name="Shiraki T."/>
            <person name="Suzuki S."/>
            <person name="Tagami M."/>
            <person name="Waki K."/>
            <person name="Watahiki A."/>
            <person name="Okamura-Oho Y."/>
            <person name="Suzuki H."/>
            <person name="Kawai J."/>
            <person name="Hayashizaki Y."/>
        </authorList>
    </citation>
    <scope>NUCLEOTIDE SEQUENCE [LARGE SCALE MRNA] (ISOFORMS 1 AND 2)</scope>
    <source>
        <strain>C57BL/6J</strain>
        <tissue>Medulla oblongata</tissue>
        <tissue>Pancreas</tissue>
        <tissue>Placenta</tissue>
    </source>
</reference>
<reference key="2">
    <citation type="journal article" date="2014" name="Mol. Cell. Proteomics">
        <title>Immunoaffinity enrichment and mass spectrometry analysis of protein methylation.</title>
        <authorList>
            <person name="Guo A."/>
            <person name="Gu H."/>
            <person name="Zhou J."/>
            <person name="Mulhern D."/>
            <person name="Wang Y."/>
            <person name="Lee K.A."/>
            <person name="Yang V."/>
            <person name="Aguiar M."/>
            <person name="Kornhauser J."/>
            <person name="Jia X."/>
            <person name="Ren J."/>
            <person name="Beausoleil S.A."/>
            <person name="Silva J.C."/>
            <person name="Vemulapalli V."/>
            <person name="Bedford M.T."/>
            <person name="Comb M.J."/>
        </authorList>
    </citation>
    <scope>METHYLATION [LARGE SCALE ANALYSIS] AT ARG-61</scope>
    <scope>IDENTIFICATION BY MASS SPECTROMETRY [LARGE SCALE ANALYSIS]</scope>
    <source>
        <tissue>Brain</tissue>
        <tissue>Embryo</tissue>
    </source>
</reference>
<name>CX038_MOUSE</name>
<accession>Q8C5K5</accession>
<accession>Q3TFM9</accession>
<accession>Q8CF12</accession>
<sequence length="320" mass="36589">MVVSELAARLNCAEYKNWVKAGHCLLLLRSCLQGFIDREVLSFHRGLLAAVPGLGPHATCRGGSRCSPRARQFQPQCQVCAEWKHEILRHHINRNGDVHWGNCKPGLWPKDPWEVAKAFMPRGLADKRGPEECDAVALLSLINSCDHFVVDRKKVTEVIKCRNEIMHSSEMKVSSTWLRDFQIKIQNFLNEFKNIPEIVAVYSRIEQLLTSDWAVHIPEEDERDGCEFEIGSYLSVSQIHEIEIELLKEKLQEMYLQAAEEEMLPEEISNQLDVVKGFLGSNTDLRNGLTEDLQKLESLHLQHQKQTSKDAGRQTPERKA</sequence>
<keyword id="KW-0025">Alternative splicing</keyword>
<keyword id="KW-0488">Methylation</keyword>
<keyword id="KW-0597">Phosphoprotein</keyword>
<keyword id="KW-1185">Reference proteome</keyword>
<proteinExistence type="evidence at protein level"/>
<evidence type="ECO:0000250" key="1">
    <source>
        <dbReference type="UniProtKB" id="Q8TB03"/>
    </source>
</evidence>
<evidence type="ECO:0000256" key="2">
    <source>
        <dbReference type="SAM" id="MobiDB-lite"/>
    </source>
</evidence>
<evidence type="ECO:0000303" key="3">
    <source>
    </source>
</evidence>
<evidence type="ECO:0000305" key="4"/>
<evidence type="ECO:0007744" key="5">
    <source>
    </source>
</evidence>
<comment type="alternative products">
    <event type="alternative splicing"/>
    <isoform>
        <id>Q8C5K5-1</id>
        <name>1</name>
        <sequence type="displayed"/>
    </isoform>
    <isoform>
        <id>Q8C5K5-2</id>
        <name>2</name>
        <sequence type="described" ref="VSP_014623"/>
    </isoform>
</comment>
<dbReference type="EMBL" id="AK007661">
    <property type="protein sequence ID" value="BAC25180.1"/>
    <property type="molecule type" value="mRNA"/>
</dbReference>
<dbReference type="EMBL" id="AK078166">
    <property type="protein sequence ID" value="BAC37156.1"/>
    <property type="molecule type" value="mRNA"/>
</dbReference>
<dbReference type="EMBL" id="AK146041">
    <property type="protein sequence ID" value="BAE26853.1"/>
    <property type="molecule type" value="mRNA"/>
</dbReference>
<dbReference type="EMBL" id="AK169085">
    <property type="protein sequence ID" value="BAE40869.1"/>
    <property type="molecule type" value="mRNA"/>
</dbReference>
<dbReference type="CCDS" id="CCDS30024.1">
    <molecule id="Q8C5K5-1"/>
</dbReference>
<dbReference type="RefSeq" id="NP_780350.1">
    <molecule id="Q8C5K5-1"/>
    <property type="nucleotide sequence ID" value="NM_175141.6"/>
</dbReference>
<dbReference type="RefSeq" id="XP_006527761.1">
    <molecule id="Q8C5K5-1"/>
    <property type="nucleotide sequence ID" value="XM_006527698.4"/>
</dbReference>
<dbReference type="SMR" id="Q8C5K5"/>
<dbReference type="BioGRID" id="213259">
    <property type="interactions" value="1"/>
</dbReference>
<dbReference type="FunCoup" id="Q8C5K5">
    <property type="interactions" value="129"/>
</dbReference>
<dbReference type="STRING" id="10090.ENSMUSP00000059095"/>
<dbReference type="CarbonylDB" id="Q8C5K5"/>
<dbReference type="iPTMnet" id="Q8C5K5"/>
<dbReference type="PhosphoSitePlus" id="Q8C5K5"/>
<dbReference type="PaxDb" id="10090-ENSMUSP00000059095"/>
<dbReference type="PeptideAtlas" id="Q8C5K5"/>
<dbReference type="Pumba" id="Q8C5K5"/>
<dbReference type="Antibodypedia" id="55857">
    <property type="antibodies" value="7 antibodies from 6 providers"/>
</dbReference>
<dbReference type="DNASU" id="69155"/>
<dbReference type="Ensembl" id="ENSMUST00000060108.7">
    <molecule id="Q8C5K5-1"/>
    <property type="protein sequence ID" value="ENSMUSP00000059095.7"/>
    <property type="gene ID" value="ENSMUSG00000044148.7"/>
</dbReference>
<dbReference type="GeneID" id="69155"/>
<dbReference type="KEGG" id="mmu:69155"/>
<dbReference type="UCSC" id="uc009sqy.1">
    <molecule id="Q8C5K5-1"/>
    <property type="organism name" value="mouse"/>
</dbReference>
<dbReference type="AGR" id="MGI:1916405"/>
<dbReference type="MGI" id="MGI:1916405">
    <property type="gene designation" value="1810030O07Rik"/>
</dbReference>
<dbReference type="VEuPathDB" id="HostDB:ENSMUSG00000044148"/>
<dbReference type="eggNOG" id="ENOG502QR6P">
    <property type="taxonomic scope" value="Eukaryota"/>
</dbReference>
<dbReference type="GeneTree" id="ENSGT00390000006290"/>
<dbReference type="HOGENOM" id="CLU_064748_0_0_1"/>
<dbReference type="InParanoid" id="Q8C5K5"/>
<dbReference type="OMA" id="WPSDAWE"/>
<dbReference type="OrthoDB" id="9934809at2759"/>
<dbReference type="TreeFam" id="TF333077"/>
<dbReference type="BioGRID-ORCS" id="69155">
    <property type="hits" value="0 hits in 76 CRISPR screens"/>
</dbReference>
<dbReference type="PRO" id="PR:Q8C5K5"/>
<dbReference type="Proteomes" id="UP000000589">
    <property type="component" value="Chromosome X"/>
</dbReference>
<dbReference type="RNAct" id="Q8C5K5">
    <property type="molecule type" value="protein"/>
</dbReference>
<dbReference type="Bgee" id="ENSMUSG00000044148">
    <property type="expression patterns" value="Expressed in cardiac muscle of left ventricle and 258 other cell types or tissues"/>
</dbReference>
<dbReference type="ExpressionAtlas" id="Q8C5K5">
    <property type="expression patterns" value="baseline and differential"/>
</dbReference>
<dbReference type="InterPro" id="IPR027897">
    <property type="entry name" value="DUF4559"/>
</dbReference>
<dbReference type="PANTHER" id="PTHR35083">
    <property type="entry name" value="RGD1565685 PROTEIN"/>
    <property type="match status" value="1"/>
</dbReference>
<dbReference type="PANTHER" id="PTHR35083:SF1">
    <property type="entry name" value="RGD1565685 PROTEIN"/>
    <property type="match status" value="1"/>
</dbReference>
<dbReference type="Pfam" id="PF15112">
    <property type="entry name" value="DUF4559"/>
    <property type="match status" value="1"/>
</dbReference>
<feature type="chain" id="PRO_0000079733" description="Uncharacterized protein CXorf38 homolog">
    <location>
        <begin position="1"/>
        <end position="320"/>
    </location>
</feature>
<feature type="region of interest" description="Disordered" evidence="2">
    <location>
        <begin position="299"/>
        <end position="320"/>
    </location>
</feature>
<feature type="compositionally biased region" description="Basic and acidic residues" evidence="2">
    <location>
        <begin position="307"/>
        <end position="320"/>
    </location>
</feature>
<feature type="modified residue" description="Omega-N-methylarginine" evidence="5">
    <location>
        <position position="61"/>
    </location>
</feature>
<feature type="modified residue" description="Phosphothreonine" evidence="1">
    <location>
        <position position="315"/>
    </location>
</feature>
<feature type="splice variant" id="VSP_014623" description="In isoform 2." evidence="3">
    <location>
        <begin position="1"/>
        <end position="119"/>
    </location>
</feature>
<feature type="sequence conflict" description="In Ref. 1; BAC25180." evidence="4" ref="1">
    <original>N</original>
    <variation>K</variation>
    <location>
        <position position="163"/>
    </location>
</feature>
<protein>
    <recommendedName>
        <fullName>Uncharacterized protein CXorf38 homolog</fullName>
    </recommendedName>
</protein>
<organism>
    <name type="scientific">Mus musculus</name>
    <name type="common">Mouse</name>
    <dbReference type="NCBI Taxonomy" id="10090"/>
    <lineage>
        <taxon>Eukaryota</taxon>
        <taxon>Metazoa</taxon>
        <taxon>Chordata</taxon>
        <taxon>Craniata</taxon>
        <taxon>Vertebrata</taxon>
        <taxon>Euteleostomi</taxon>
        <taxon>Mammalia</taxon>
        <taxon>Eutheria</taxon>
        <taxon>Euarchontoglires</taxon>
        <taxon>Glires</taxon>
        <taxon>Rodentia</taxon>
        <taxon>Myomorpha</taxon>
        <taxon>Muroidea</taxon>
        <taxon>Muridae</taxon>
        <taxon>Murinae</taxon>
        <taxon>Mus</taxon>
        <taxon>Mus</taxon>
    </lineage>
</organism>